<evidence type="ECO:0000255" key="1">
    <source>
        <dbReference type="HAMAP-Rule" id="MF_00005"/>
    </source>
</evidence>
<organism>
    <name type="scientific">Staphylococcus saprophyticus subsp. saprophyticus (strain ATCC 15305 / DSM 20229 / NCIMB 8711 / NCTC 7292 / S-41)</name>
    <dbReference type="NCBI Taxonomy" id="342451"/>
    <lineage>
        <taxon>Bacteria</taxon>
        <taxon>Bacillati</taxon>
        <taxon>Bacillota</taxon>
        <taxon>Bacilli</taxon>
        <taxon>Bacillales</taxon>
        <taxon>Staphylococcaceae</taxon>
        <taxon>Staphylococcus</taxon>
    </lineage>
</organism>
<keyword id="KW-0028">Amino-acid biosynthesis</keyword>
<keyword id="KW-0055">Arginine biosynthesis</keyword>
<keyword id="KW-0067">ATP-binding</keyword>
<keyword id="KW-0963">Cytoplasm</keyword>
<keyword id="KW-0436">Ligase</keyword>
<keyword id="KW-0547">Nucleotide-binding</keyword>
<keyword id="KW-1185">Reference proteome</keyword>
<feature type="chain" id="PRO_0000263979" description="Argininosuccinate synthase">
    <location>
        <begin position="1"/>
        <end position="401"/>
    </location>
</feature>
<feature type="binding site" evidence="1">
    <location>
        <begin position="8"/>
        <end position="16"/>
    </location>
    <ligand>
        <name>ATP</name>
        <dbReference type="ChEBI" id="CHEBI:30616"/>
    </ligand>
</feature>
<feature type="binding site" evidence="1">
    <location>
        <position position="85"/>
    </location>
    <ligand>
        <name>L-citrulline</name>
        <dbReference type="ChEBI" id="CHEBI:57743"/>
    </ligand>
</feature>
<feature type="binding site" evidence="1">
    <location>
        <position position="115"/>
    </location>
    <ligand>
        <name>ATP</name>
        <dbReference type="ChEBI" id="CHEBI:30616"/>
    </ligand>
</feature>
<feature type="binding site" evidence="1">
    <location>
        <position position="117"/>
    </location>
    <ligand>
        <name>L-aspartate</name>
        <dbReference type="ChEBI" id="CHEBI:29991"/>
    </ligand>
</feature>
<feature type="binding site" evidence="1">
    <location>
        <position position="121"/>
    </location>
    <ligand>
        <name>L-aspartate</name>
        <dbReference type="ChEBI" id="CHEBI:29991"/>
    </ligand>
</feature>
<feature type="binding site" evidence="1">
    <location>
        <position position="121"/>
    </location>
    <ligand>
        <name>L-citrulline</name>
        <dbReference type="ChEBI" id="CHEBI:57743"/>
    </ligand>
</feature>
<feature type="binding site" evidence="1">
    <location>
        <position position="122"/>
    </location>
    <ligand>
        <name>L-aspartate</name>
        <dbReference type="ChEBI" id="CHEBI:29991"/>
    </ligand>
</feature>
<feature type="binding site" evidence="1">
    <location>
        <position position="125"/>
    </location>
    <ligand>
        <name>L-citrulline</name>
        <dbReference type="ChEBI" id="CHEBI:57743"/>
    </ligand>
</feature>
<feature type="binding site" evidence="1">
    <location>
        <position position="173"/>
    </location>
    <ligand>
        <name>L-citrulline</name>
        <dbReference type="ChEBI" id="CHEBI:57743"/>
    </ligand>
</feature>
<feature type="binding site" evidence="1">
    <location>
        <position position="182"/>
    </location>
    <ligand>
        <name>L-citrulline</name>
        <dbReference type="ChEBI" id="CHEBI:57743"/>
    </ligand>
</feature>
<feature type="binding site" evidence="1">
    <location>
        <position position="258"/>
    </location>
    <ligand>
        <name>L-citrulline</name>
        <dbReference type="ChEBI" id="CHEBI:57743"/>
    </ligand>
</feature>
<feature type="binding site" evidence="1">
    <location>
        <position position="270"/>
    </location>
    <ligand>
        <name>L-citrulline</name>
        <dbReference type="ChEBI" id="CHEBI:57743"/>
    </ligand>
</feature>
<gene>
    <name evidence="1" type="primary">argG</name>
    <name type="ordered locus">SSP1814</name>
</gene>
<dbReference type="EC" id="6.3.4.5" evidence="1"/>
<dbReference type="EMBL" id="AP008934">
    <property type="protein sequence ID" value="BAE18959.1"/>
    <property type="molecule type" value="Genomic_DNA"/>
</dbReference>
<dbReference type="RefSeq" id="WP_011303509.1">
    <property type="nucleotide sequence ID" value="NZ_MTGA01000039.1"/>
</dbReference>
<dbReference type="SMR" id="Q49WA0"/>
<dbReference type="GeneID" id="3616469"/>
<dbReference type="KEGG" id="ssp:SSP1814"/>
<dbReference type="PATRIC" id="fig|342451.11.peg.1810"/>
<dbReference type="eggNOG" id="COG0137">
    <property type="taxonomic scope" value="Bacteria"/>
</dbReference>
<dbReference type="HOGENOM" id="CLU_032784_4_2_9"/>
<dbReference type="OrthoDB" id="9801641at2"/>
<dbReference type="UniPathway" id="UPA00068">
    <property type="reaction ID" value="UER00113"/>
</dbReference>
<dbReference type="Proteomes" id="UP000006371">
    <property type="component" value="Chromosome"/>
</dbReference>
<dbReference type="GO" id="GO:0005737">
    <property type="term" value="C:cytoplasm"/>
    <property type="evidence" value="ECO:0007669"/>
    <property type="project" value="UniProtKB-SubCell"/>
</dbReference>
<dbReference type="GO" id="GO:0004055">
    <property type="term" value="F:argininosuccinate synthase activity"/>
    <property type="evidence" value="ECO:0007669"/>
    <property type="project" value="UniProtKB-UniRule"/>
</dbReference>
<dbReference type="GO" id="GO:0005524">
    <property type="term" value="F:ATP binding"/>
    <property type="evidence" value="ECO:0007669"/>
    <property type="project" value="UniProtKB-UniRule"/>
</dbReference>
<dbReference type="GO" id="GO:0000053">
    <property type="term" value="P:argininosuccinate metabolic process"/>
    <property type="evidence" value="ECO:0007669"/>
    <property type="project" value="TreeGrafter"/>
</dbReference>
<dbReference type="GO" id="GO:0006526">
    <property type="term" value="P:L-arginine biosynthetic process"/>
    <property type="evidence" value="ECO:0007669"/>
    <property type="project" value="UniProtKB-UniRule"/>
</dbReference>
<dbReference type="GO" id="GO:0000050">
    <property type="term" value="P:urea cycle"/>
    <property type="evidence" value="ECO:0007669"/>
    <property type="project" value="TreeGrafter"/>
</dbReference>
<dbReference type="CDD" id="cd01999">
    <property type="entry name" value="ASS"/>
    <property type="match status" value="1"/>
</dbReference>
<dbReference type="FunFam" id="1.20.5.470:FF:000002">
    <property type="entry name" value="Argininosuccinate synthase"/>
    <property type="match status" value="1"/>
</dbReference>
<dbReference type="FunFam" id="3.40.50.620:FF:000038">
    <property type="entry name" value="Argininosuccinate synthase"/>
    <property type="match status" value="1"/>
</dbReference>
<dbReference type="FunFam" id="3.90.1260.10:FF:000007">
    <property type="entry name" value="Argininosuccinate synthase"/>
    <property type="match status" value="1"/>
</dbReference>
<dbReference type="Gene3D" id="3.90.1260.10">
    <property type="entry name" value="Argininosuccinate synthetase, chain A, domain 2"/>
    <property type="match status" value="1"/>
</dbReference>
<dbReference type="Gene3D" id="3.40.50.620">
    <property type="entry name" value="HUPs"/>
    <property type="match status" value="1"/>
</dbReference>
<dbReference type="Gene3D" id="1.20.5.470">
    <property type="entry name" value="Single helix bin"/>
    <property type="match status" value="1"/>
</dbReference>
<dbReference type="HAMAP" id="MF_00005">
    <property type="entry name" value="Arg_succ_synth_type1"/>
    <property type="match status" value="1"/>
</dbReference>
<dbReference type="InterPro" id="IPR048268">
    <property type="entry name" value="Arginosuc_syn_C"/>
</dbReference>
<dbReference type="InterPro" id="IPR048267">
    <property type="entry name" value="Arginosuc_syn_N"/>
</dbReference>
<dbReference type="InterPro" id="IPR001518">
    <property type="entry name" value="Arginosuc_synth"/>
</dbReference>
<dbReference type="InterPro" id="IPR018223">
    <property type="entry name" value="Arginosuc_synth_CS"/>
</dbReference>
<dbReference type="InterPro" id="IPR023434">
    <property type="entry name" value="Arginosuc_synth_type_1_subfam"/>
</dbReference>
<dbReference type="InterPro" id="IPR024074">
    <property type="entry name" value="AS_cat/multimer_dom_body"/>
</dbReference>
<dbReference type="InterPro" id="IPR014729">
    <property type="entry name" value="Rossmann-like_a/b/a_fold"/>
</dbReference>
<dbReference type="NCBIfam" id="TIGR00032">
    <property type="entry name" value="argG"/>
    <property type="match status" value="1"/>
</dbReference>
<dbReference type="NCBIfam" id="NF001770">
    <property type="entry name" value="PRK00509.1"/>
    <property type="match status" value="1"/>
</dbReference>
<dbReference type="PANTHER" id="PTHR11587">
    <property type="entry name" value="ARGININOSUCCINATE SYNTHASE"/>
    <property type="match status" value="1"/>
</dbReference>
<dbReference type="PANTHER" id="PTHR11587:SF2">
    <property type="entry name" value="ARGININOSUCCINATE SYNTHASE"/>
    <property type="match status" value="1"/>
</dbReference>
<dbReference type="Pfam" id="PF20979">
    <property type="entry name" value="Arginosuc_syn_C"/>
    <property type="match status" value="1"/>
</dbReference>
<dbReference type="Pfam" id="PF00764">
    <property type="entry name" value="Arginosuc_synth"/>
    <property type="match status" value="1"/>
</dbReference>
<dbReference type="SUPFAM" id="SSF52402">
    <property type="entry name" value="Adenine nucleotide alpha hydrolases-like"/>
    <property type="match status" value="1"/>
</dbReference>
<dbReference type="SUPFAM" id="SSF69864">
    <property type="entry name" value="Argininosuccinate synthetase, C-terminal domain"/>
    <property type="match status" value="1"/>
</dbReference>
<dbReference type="PROSITE" id="PS00564">
    <property type="entry name" value="ARGININOSUCCIN_SYN_1"/>
    <property type="match status" value="1"/>
</dbReference>
<dbReference type="PROSITE" id="PS00565">
    <property type="entry name" value="ARGININOSUCCIN_SYN_2"/>
    <property type="match status" value="1"/>
</dbReference>
<sequence>MKEKIVLAYSGGLDTSVAVKWLLDKGYDVVACCLDVGEGKDLELVHQKALDMGAIECHIIDATEEFSQDYVSYAIKGNLMYEGTYPLVSALSRPLISKKLVEIASKTNSVGIAHGCTGKGNDQVRFEVAIKALDPELKVFAPVREWAWSREEEIDYAIKHNIPVPIQHDSPYSIDQNLWGRSNECGILEDPYATPPKDAYDLTNELEDAPDEAEEIVLSFEKGIPVSLDGTAYKLSELILELNKLAGKHGVGRIDHVENRLVGIKSREVYETPAAEVIMNAHKALETITLTKDVAHFKPVIEKQFSEQIYNGLWFSPLTDSLKIFVDSTQAHVTGDVRLKLYKGNAIVNGRQSPYTLYNEKLATYTKEDAFNQESAVGFIDIFGLPTKVNSMLHGGYKDEQ</sequence>
<accession>Q49WA0</accession>
<protein>
    <recommendedName>
        <fullName evidence="1">Argininosuccinate synthase</fullName>
        <ecNumber evidence="1">6.3.4.5</ecNumber>
    </recommendedName>
    <alternativeName>
        <fullName evidence="1">Citrulline--aspartate ligase</fullName>
    </alternativeName>
</protein>
<name>ASSY_STAS1</name>
<comment type="catalytic activity">
    <reaction evidence="1">
        <text>L-citrulline + L-aspartate + ATP = 2-(N(omega)-L-arginino)succinate + AMP + diphosphate + H(+)</text>
        <dbReference type="Rhea" id="RHEA:10932"/>
        <dbReference type="ChEBI" id="CHEBI:15378"/>
        <dbReference type="ChEBI" id="CHEBI:29991"/>
        <dbReference type="ChEBI" id="CHEBI:30616"/>
        <dbReference type="ChEBI" id="CHEBI:33019"/>
        <dbReference type="ChEBI" id="CHEBI:57472"/>
        <dbReference type="ChEBI" id="CHEBI:57743"/>
        <dbReference type="ChEBI" id="CHEBI:456215"/>
        <dbReference type="EC" id="6.3.4.5"/>
    </reaction>
</comment>
<comment type="pathway">
    <text evidence="1">Amino-acid biosynthesis; L-arginine biosynthesis; L-arginine from L-ornithine and carbamoyl phosphate: step 2/3.</text>
</comment>
<comment type="subunit">
    <text evidence="1">Homotetramer.</text>
</comment>
<comment type="subcellular location">
    <subcellularLocation>
        <location evidence="1">Cytoplasm</location>
    </subcellularLocation>
</comment>
<comment type="similarity">
    <text evidence="1">Belongs to the argininosuccinate synthase family. Type 1 subfamily.</text>
</comment>
<reference key="1">
    <citation type="journal article" date="2005" name="Proc. Natl. Acad. Sci. U.S.A.">
        <title>Whole genome sequence of Staphylococcus saprophyticus reveals the pathogenesis of uncomplicated urinary tract infection.</title>
        <authorList>
            <person name="Kuroda M."/>
            <person name="Yamashita A."/>
            <person name="Hirakawa H."/>
            <person name="Kumano M."/>
            <person name="Morikawa K."/>
            <person name="Higashide M."/>
            <person name="Maruyama A."/>
            <person name="Inose Y."/>
            <person name="Matoba K."/>
            <person name="Toh H."/>
            <person name="Kuhara S."/>
            <person name="Hattori M."/>
            <person name="Ohta T."/>
        </authorList>
    </citation>
    <scope>NUCLEOTIDE SEQUENCE [LARGE SCALE GENOMIC DNA]</scope>
    <source>
        <strain>ATCC 15305 / DSM 20229 / NCIMB 8711 / NCTC 7292 / S-41</strain>
    </source>
</reference>
<proteinExistence type="inferred from homology"/>